<comment type="function">
    <text evidence="1">Acts as an alpha-ketoglutarate-dependent dioxygenase catalyzing hydroxylation of glutarate (GA) to L-2-hydroxyglutarate (L2HG). Functions in a L-lysine degradation pathway that proceeds via cadaverine, glutarate and L-2-hydroxyglutarate.</text>
</comment>
<comment type="catalytic activity">
    <reaction evidence="1">
        <text>glutarate + 2-oxoglutarate + O2 = (S)-2-hydroxyglutarate + succinate + CO2</text>
        <dbReference type="Rhea" id="RHEA:13821"/>
        <dbReference type="ChEBI" id="CHEBI:15379"/>
        <dbReference type="ChEBI" id="CHEBI:16526"/>
        <dbReference type="ChEBI" id="CHEBI:16782"/>
        <dbReference type="ChEBI" id="CHEBI:16810"/>
        <dbReference type="ChEBI" id="CHEBI:30031"/>
        <dbReference type="ChEBI" id="CHEBI:30921"/>
        <dbReference type="EC" id="1.14.11.64"/>
    </reaction>
    <physiologicalReaction direction="left-to-right" evidence="1">
        <dbReference type="Rhea" id="RHEA:13822"/>
    </physiologicalReaction>
</comment>
<comment type="cofactor">
    <cofactor evidence="1">
        <name>Fe(2+)</name>
        <dbReference type="ChEBI" id="CHEBI:29033"/>
    </cofactor>
    <text evidence="1">Binds 1 Fe(2+) ion per subunit.</text>
</comment>
<comment type="pathway">
    <text evidence="1">Amino-acid degradation.</text>
</comment>
<comment type="subunit">
    <text evidence="1">Homotetramer.</text>
</comment>
<comment type="similarity">
    <text evidence="1">Belongs to the glutarate hydroxylase family.</text>
</comment>
<gene>
    <name evidence="1" type="primary">glaH</name>
    <name type="ordered locus">ECH74115_3901</name>
</gene>
<feature type="chain" id="PRO_1000136864" description="Glutarate 2-hydroxylase">
    <location>
        <begin position="1"/>
        <end position="325"/>
    </location>
</feature>
<feature type="binding site" evidence="1">
    <location>
        <position position="160"/>
    </location>
    <ligand>
        <name>Fe cation</name>
        <dbReference type="ChEBI" id="CHEBI:24875"/>
    </ligand>
</feature>
<feature type="binding site" evidence="1">
    <location>
        <position position="162"/>
    </location>
    <ligand>
        <name>Fe cation</name>
        <dbReference type="ChEBI" id="CHEBI:24875"/>
    </ligand>
</feature>
<feature type="binding site" evidence="1">
    <location>
        <position position="292"/>
    </location>
    <ligand>
        <name>Fe cation</name>
        <dbReference type="ChEBI" id="CHEBI:24875"/>
    </ligand>
</feature>
<accession>B5Z271</accession>
<protein>
    <recommendedName>
        <fullName evidence="1">Glutarate 2-hydroxylase</fullName>
        <shortName evidence="1">G-2-H</shortName>
        <ecNumber evidence="1">1.14.11.64</ecNumber>
    </recommendedName>
</protein>
<evidence type="ECO:0000255" key="1">
    <source>
        <dbReference type="HAMAP-Rule" id="MF_01083"/>
    </source>
</evidence>
<dbReference type="EC" id="1.14.11.64" evidence="1"/>
<dbReference type="EMBL" id="CP001164">
    <property type="protein sequence ID" value="ACI35623.1"/>
    <property type="molecule type" value="Genomic_DNA"/>
</dbReference>
<dbReference type="RefSeq" id="WP_001301435.1">
    <property type="nucleotide sequence ID" value="NC_011353.1"/>
</dbReference>
<dbReference type="SMR" id="B5Z271"/>
<dbReference type="KEGG" id="ecf:ECH74115_3901"/>
<dbReference type="HOGENOM" id="CLU_075277_0_0_6"/>
<dbReference type="GO" id="GO:0008198">
    <property type="term" value="F:ferrous iron binding"/>
    <property type="evidence" value="ECO:0007669"/>
    <property type="project" value="UniProtKB-UniRule"/>
</dbReference>
<dbReference type="GO" id="GO:0106343">
    <property type="term" value="F:glutarate dioxygenase activity"/>
    <property type="evidence" value="ECO:0007669"/>
    <property type="project" value="UniProtKB-EC"/>
</dbReference>
<dbReference type="GO" id="GO:0050498">
    <property type="term" value="F:oxidoreductase activity, acting on paired donors, with incorporation or reduction of molecular oxygen, with 2-oxoglutarate as one donor, and the other dehydrogenated"/>
    <property type="evidence" value="ECO:0007669"/>
    <property type="project" value="UniProtKB-UniRule"/>
</dbReference>
<dbReference type="GO" id="GO:0019477">
    <property type="term" value="P:L-lysine catabolic process"/>
    <property type="evidence" value="ECO:0007669"/>
    <property type="project" value="UniProtKB-UniRule"/>
</dbReference>
<dbReference type="CDD" id="cd00250">
    <property type="entry name" value="CAS_like"/>
    <property type="match status" value="1"/>
</dbReference>
<dbReference type="FunFam" id="3.60.130.10:FF:000004">
    <property type="entry name" value="Glutarate 2-hydroxylase"/>
    <property type="match status" value="1"/>
</dbReference>
<dbReference type="Gene3D" id="3.60.130.10">
    <property type="entry name" value="Clavaminate synthase-like"/>
    <property type="match status" value="1"/>
</dbReference>
<dbReference type="HAMAP" id="MF_01083">
    <property type="entry name" value="glutarate_hydroxylase"/>
    <property type="match status" value="1"/>
</dbReference>
<dbReference type="InterPro" id="IPR015038">
    <property type="entry name" value="GlaH"/>
</dbReference>
<dbReference type="InterPro" id="IPR042098">
    <property type="entry name" value="TauD-like_sf"/>
</dbReference>
<dbReference type="NCBIfam" id="NF002814">
    <property type="entry name" value="PRK02963.1"/>
    <property type="match status" value="1"/>
</dbReference>
<dbReference type="Pfam" id="PF08943">
    <property type="entry name" value="CsiD"/>
    <property type="match status" value="1"/>
</dbReference>
<dbReference type="SUPFAM" id="SSF51197">
    <property type="entry name" value="Clavaminate synthase-like"/>
    <property type="match status" value="1"/>
</dbReference>
<name>GLAH_ECO5E</name>
<reference key="1">
    <citation type="journal article" date="2011" name="Proc. Natl. Acad. Sci. U.S.A.">
        <title>Genomic anatomy of Escherichia coli O157:H7 outbreaks.</title>
        <authorList>
            <person name="Eppinger M."/>
            <person name="Mammel M.K."/>
            <person name="Leclerc J.E."/>
            <person name="Ravel J."/>
            <person name="Cebula T.A."/>
        </authorList>
    </citation>
    <scope>NUCLEOTIDE SEQUENCE [LARGE SCALE GENOMIC DNA]</scope>
    <source>
        <strain>EC4115 / EHEC</strain>
    </source>
</reference>
<organism>
    <name type="scientific">Escherichia coli O157:H7 (strain EC4115 / EHEC)</name>
    <dbReference type="NCBI Taxonomy" id="444450"/>
    <lineage>
        <taxon>Bacteria</taxon>
        <taxon>Pseudomonadati</taxon>
        <taxon>Pseudomonadota</taxon>
        <taxon>Gammaproteobacteria</taxon>
        <taxon>Enterobacterales</taxon>
        <taxon>Enterobacteriaceae</taxon>
        <taxon>Escherichia</taxon>
    </lineage>
</organism>
<sequence length="325" mass="37507">MNALTAVQNNAVDSDQDYSGFTLIPSAQSPRLLELTFTEQTTKQFLEQVAEWPVQALEYKSFLRFRVGKILDDLCANQLQPLLLKTLLNRAEGALLINAVGVDDVKQADEMVKLATAVAHLIGRSNFDAMSGQYYARFVVKNVDNSDSYLRQPHRVMELHNDGTYVEEITDYVLMMKIDEQNMQGGNSLLLHLDDWEHLDHYFRHPMARRPMRFAAPPSKNVSKDVFHPVFDVDQQGRPVMRYIDQFVQPKDFEEGVWLSELSDAIEISKGILSVPVPVGKFLLINNLFWLHGRDRFTPHPDLRRELMRQRGYFAYATHHYQTHQ</sequence>
<keyword id="KW-0223">Dioxygenase</keyword>
<keyword id="KW-0408">Iron</keyword>
<keyword id="KW-0479">Metal-binding</keyword>
<keyword id="KW-0560">Oxidoreductase</keyword>
<proteinExistence type="inferred from homology"/>